<comment type="function">
    <text evidence="2">Component of the ubiquinol-cytochrome c reductase complex (complex III or cytochrome b-c1 complex) that is part of the mitochondrial respiratory chain. The b-c1 complex mediates electron transfer from ubiquinol to cytochrome c. Contributes to the generation of a proton gradient across the mitochondrial membrane that is then used for ATP synthesis.</text>
</comment>
<comment type="cofactor">
    <cofactor evidence="2">
        <name>heme b</name>
        <dbReference type="ChEBI" id="CHEBI:60344"/>
    </cofactor>
    <text evidence="2">Binds 2 heme b groups non-covalently.</text>
</comment>
<comment type="subunit">
    <text evidence="2">The cytochrome bc1 complex contains 3 respiratory subunits (MT-CYB, CYC1 and UQCRFS1), 2 core proteins (UQCRC1 and UQCRC2) and probably 6 low-molecular weight proteins.</text>
</comment>
<comment type="subcellular location">
    <subcellularLocation>
        <location evidence="2">Mitochondrion inner membrane</location>
        <topology evidence="2">Multi-pass membrane protein</topology>
    </subcellularLocation>
</comment>
<comment type="miscellaneous">
    <text evidence="1">Heme 1 (or BL or b562) is low-potential and absorbs at about 562 nm, and heme 2 (or BH or b566) is high-potential and absorbs at about 566 nm.</text>
</comment>
<comment type="similarity">
    <text evidence="3 4">Belongs to the cytochrome b family.</text>
</comment>
<comment type="caution">
    <text evidence="2">The full-length protein contains only eight transmembrane helices, not nine as predicted by bioinformatics tools.</text>
</comment>
<gene>
    <name type="primary">MT-CYB</name>
    <name type="synonym">COB</name>
    <name type="synonym">CYTB</name>
    <name type="synonym">MTCYB</name>
</gene>
<reference key="1">
    <citation type="journal article" date="2000" name="Mol. Phylogenet. Evol.">
        <title>Phylogenetic relationships of elapid snakes based on cytochrome b mtDNA sequences.</title>
        <authorList>
            <person name="Slowinski J.B."/>
            <person name="Keogh J.S."/>
        </authorList>
    </citation>
    <scope>NUCLEOTIDE SEQUENCE [GENOMIC DNA]</scope>
</reference>
<evidence type="ECO:0000250" key="1"/>
<evidence type="ECO:0000250" key="2">
    <source>
        <dbReference type="UniProtKB" id="P00157"/>
    </source>
</evidence>
<evidence type="ECO:0000255" key="3">
    <source>
        <dbReference type="PROSITE-ProRule" id="PRU00967"/>
    </source>
</evidence>
<evidence type="ECO:0000255" key="4">
    <source>
        <dbReference type="PROSITE-ProRule" id="PRU00968"/>
    </source>
</evidence>
<keyword id="KW-0249">Electron transport</keyword>
<keyword id="KW-0349">Heme</keyword>
<keyword id="KW-0408">Iron</keyword>
<keyword id="KW-0472">Membrane</keyword>
<keyword id="KW-0479">Metal-binding</keyword>
<keyword id="KW-0496">Mitochondrion</keyword>
<keyword id="KW-0999">Mitochondrion inner membrane</keyword>
<keyword id="KW-0679">Respiratory chain</keyword>
<keyword id="KW-0812">Transmembrane</keyword>
<keyword id="KW-1133">Transmembrane helix</keyword>
<keyword id="KW-0813">Transport</keyword>
<keyword id="KW-0830">Ubiquinone</keyword>
<accession>Q9MLJ8</accession>
<dbReference type="EMBL" id="AF217830">
    <property type="protein sequence ID" value="AAF37249.1"/>
    <property type="molecule type" value="Genomic_DNA"/>
</dbReference>
<dbReference type="SMR" id="Q9MLJ8"/>
<dbReference type="GO" id="GO:0005743">
    <property type="term" value="C:mitochondrial inner membrane"/>
    <property type="evidence" value="ECO:0007669"/>
    <property type="project" value="UniProtKB-SubCell"/>
</dbReference>
<dbReference type="GO" id="GO:0045275">
    <property type="term" value="C:respiratory chain complex III"/>
    <property type="evidence" value="ECO:0007669"/>
    <property type="project" value="InterPro"/>
</dbReference>
<dbReference type="GO" id="GO:0046872">
    <property type="term" value="F:metal ion binding"/>
    <property type="evidence" value="ECO:0007669"/>
    <property type="project" value="UniProtKB-KW"/>
</dbReference>
<dbReference type="GO" id="GO:0008121">
    <property type="term" value="F:ubiquinol-cytochrome-c reductase activity"/>
    <property type="evidence" value="ECO:0007669"/>
    <property type="project" value="InterPro"/>
</dbReference>
<dbReference type="GO" id="GO:0006122">
    <property type="term" value="P:mitochondrial electron transport, ubiquinol to cytochrome c"/>
    <property type="evidence" value="ECO:0007669"/>
    <property type="project" value="TreeGrafter"/>
</dbReference>
<dbReference type="CDD" id="cd00290">
    <property type="entry name" value="cytochrome_b_C"/>
    <property type="match status" value="1"/>
</dbReference>
<dbReference type="CDD" id="cd00284">
    <property type="entry name" value="Cytochrome_b_N"/>
    <property type="match status" value="1"/>
</dbReference>
<dbReference type="Gene3D" id="1.20.810.10">
    <property type="entry name" value="Cytochrome Bc1 Complex, Chain C"/>
    <property type="match status" value="1"/>
</dbReference>
<dbReference type="InterPro" id="IPR005798">
    <property type="entry name" value="Cyt_b/b6_C"/>
</dbReference>
<dbReference type="InterPro" id="IPR036150">
    <property type="entry name" value="Cyt_b/b6_C_sf"/>
</dbReference>
<dbReference type="InterPro" id="IPR005797">
    <property type="entry name" value="Cyt_b/b6_N"/>
</dbReference>
<dbReference type="InterPro" id="IPR027387">
    <property type="entry name" value="Cytb/b6-like_sf"/>
</dbReference>
<dbReference type="InterPro" id="IPR030689">
    <property type="entry name" value="Cytochrome_b"/>
</dbReference>
<dbReference type="InterPro" id="IPR048260">
    <property type="entry name" value="Cytochrome_b_C_euk/bac"/>
</dbReference>
<dbReference type="InterPro" id="IPR048259">
    <property type="entry name" value="Cytochrome_b_N_euk/bac"/>
</dbReference>
<dbReference type="InterPro" id="IPR016174">
    <property type="entry name" value="Di-haem_cyt_TM"/>
</dbReference>
<dbReference type="PANTHER" id="PTHR19271">
    <property type="entry name" value="CYTOCHROME B"/>
    <property type="match status" value="1"/>
</dbReference>
<dbReference type="PANTHER" id="PTHR19271:SF16">
    <property type="entry name" value="CYTOCHROME B"/>
    <property type="match status" value="1"/>
</dbReference>
<dbReference type="Pfam" id="PF00032">
    <property type="entry name" value="Cytochrom_B_C"/>
    <property type="match status" value="1"/>
</dbReference>
<dbReference type="Pfam" id="PF00033">
    <property type="entry name" value="Cytochrome_B"/>
    <property type="match status" value="1"/>
</dbReference>
<dbReference type="PIRSF" id="PIRSF038885">
    <property type="entry name" value="COB"/>
    <property type="match status" value="1"/>
</dbReference>
<dbReference type="SUPFAM" id="SSF81648">
    <property type="entry name" value="a domain/subunit of cytochrome bc1 complex (Ubiquinol-cytochrome c reductase)"/>
    <property type="match status" value="1"/>
</dbReference>
<dbReference type="SUPFAM" id="SSF81342">
    <property type="entry name" value="Transmembrane di-heme cytochromes"/>
    <property type="match status" value="1"/>
</dbReference>
<dbReference type="PROSITE" id="PS51003">
    <property type="entry name" value="CYTB_CTER"/>
    <property type="match status" value="1"/>
</dbReference>
<dbReference type="PROSITE" id="PS51002">
    <property type="entry name" value="CYTB_NTER"/>
    <property type="match status" value="1"/>
</dbReference>
<feature type="chain" id="PRO_0000060698" description="Cytochrome b">
    <location>
        <begin position="1"/>
        <end position="370"/>
    </location>
</feature>
<feature type="transmembrane region" description="Helical" evidence="2">
    <location>
        <begin position="25"/>
        <end position="45"/>
    </location>
</feature>
<feature type="transmembrane region" description="Helical" evidence="2">
    <location>
        <begin position="69"/>
        <end position="90"/>
    </location>
</feature>
<feature type="transmembrane region" description="Helical" evidence="2">
    <location>
        <begin position="105"/>
        <end position="125"/>
    </location>
</feature>
<feature type="transmembrane region" description="Helical" evidence="2">
    <location>
        <begin position="170"/>
        <end position="190"/>
    </location>
</feature>
<feature type="transmembrane region" description="Helical" evidence="2">
    <location>
        <begin position="218"/>
        <end position="238"/>
    </location>
</feature>
<feature type="transmembrane region" description="Helical" evidence="2">
    <location>
        <begin position="280"/>
        <end position="300"/>
    </location>
</feature>
<feature type="transmembrane region" description="Helical" evidence="2">
    <location>
        <begin position="312"/>
        <end position="332"/>
    </location>
</feature>
<feature type="transmembrane region" description="Helical" evidence="2">
    <location>
        <begin position="339"/>
        <end position="358"/>
    </location>
</feature>
<feature type="binding site" description="axial binding residue" evidence="2">
    <location>
        <position position="75"/>
    </location>
    <ligand>
        <name>heme b</name>
        <dbReference type="ChEBI" id="CHEBI:60344"/>
        <label>b562</label>
    </ligand>
    <ligandPart>
        <name>Fe</name>
        <dbReference type="ChEBI" id="CHEBI:18248"/>
    </ligandPart>
</feature>
<feature type="binding site" description="axial binding residue" evidence="2">
    <location>
        <position position="89"/>
    </location>
    <ligand>
        <name>heme b</name>
        <dbReference type="ChEBI" id="CHEBI:60344"/>
        <label>b566</label>
    </ligand>
    <ligandPart>
        <name>Fe</name>
        <dbReference type="ChEBI" id="CHEBI:18248"/>
    </ligandPart>
</feature>
<feature type="binding site" description="axial binding residue" evidence="2">
    <location>
        <position position="174"/>
    </location>
    <ligand>
        <name>heme b</name>
        <dbReference type="ChEBI" id="CHEBI:60344"/>
        <label>b562</label>
    </ligand>
    <ligandPart>
        <name>Fe</name>
        <dbReference type="ChEBI" id="CHEBI:18248"/>
    </ligandPart>
</feature>
<feature type="binding site" description="axial binding residue" evidence="2">
    <location>
        <position position="188"/>
    </location>
    <ligand>
        <name>heme b</name>
        <dbReference type="ChEBI" id="CHEBI:60344"/>
        <label>b566</label>
    </ligand>
    <ligandPart>
        <name>Fe</name>
        <dbReference type="ChEBI" id="CHEBI:18248"/>
    </ligandPart>
</feature>
<feature type="binding site" evidence="2">
    <location>
        <position position="193"/>
    </location>
    <ligand>
        <name>a ubiquinone</name>
        <dbReference type="ChEBI" id="CHEBI:16389"/>
    </ligand>
</feature>
<sequence length="370" mass="42002">MSNQHILLMSNLLPVGSNISTWWNFGSMLLTCLLLQIMTGFFLAIHYTANINLAFSSVVHILRDVPYGWIMQNIHAIGASLFFICIYIHIARGLYYGLYLNKEVWLSGTALLITLMATAFFGYVLPWGQMSFLAATVITNLLTAIPYLGNTLTIWLWGGFSINDPTLTRFFALHFILPFAIISLSSIHIILLHNEGSNNPLGTNSDIDKIPLHPYHSYKDMLMITIMITMLFITMSFTPNLLNDPENFSKANPLLTPQHIKPEWYFLFAYGILRSIPNKLGGTMALIMSVAILITVPFTHTSHTRSMLFRPLTQILFWTLISTFIIITWTATKPVESPFISISQMTSIIYFSFFIINPLLGWIENKIMMP</sequence>
<protein>
    <recommendedName>
        <fullName>Cytochrome b</fullName>
    </recommendedName>
    <alternativeName>
        <fullName>Complex III subunit 3</fullName>
    </alternativeName>
    <alternativeName>
        <fullName>Complex III subunit III</fullName>
    </alternativeName>
    <alternativeName>
        <fullName>Cytochrome b-c1 complex subunit 3</fullName>
    </alternativeName>
    <alternativeName>
        <fullName>Ubiquinol-cytochrome-c reductase complex cytochrome b subunit</fullName>
    </alternativeName>
</protein>
<name>CYB_BUNFA</name>
<organism>
    <name type="scientific">Bungarus fasciatus</name>
    <name type="common">Banded krait</name>
    <name type="synonym">Pseudoboa fasciata</name>
    <dbReference type="NCBI Taxonomy" id="8613"/>
    <lineage>
        <taxon>Eukaryota</taxon>
        <taxon>Metazoa</taxon>
        <taxon>Chordata</taxon>
        <taxon>Craniata</taxon>
        <taxon>Vertebrata</taxon>
        <taxon>Euteleostomi</taxon>
        <taxon>Lepidosauria</taxon>
        <taxon>Squamata</taxon>
        <taxon>Bifurcata</taxon>
        <taxon>Unidentata</taxon>
        <taxon>Episquamata</taxon>
        <taxon>Toxicofera</taxon>
        <taxon>Serpentes</taxon>
        <taxon>Colubroidea</taxon>
        <taxon>Elapidae</taxon>
        <taxon>Bungarinae</taxon>
        <taxon>Bungarus</taxon>
    </lineage>
</organism>
<proteinExistence type="inferred from homology"/>
<geneLocation type="mitochondrion"/>